<dbReference type="EC" id="2.7.1.6" evidence="1"/>
<dbReference type="EMBL" id="X73124">
    <property type="protein sequence ID" value="CAA51591.1"/>
    <property type="molecule type" value="Genomic_DNA"/>
</dbReference>
<dbReference type="EMBL" id="AL009126">
    <property type="protein sequence ID" value="CAB15846.1"/>
    <property type="molecule type" value="Genomic_DNA"/>
</dbReference>
<dbReference type="PIR" id="S39690">
    <property type="entry name" value="S39690"/>
</dbReference>
<dbReference type="RefSeq" id="NP_391699.1">
    <property type="nucleotide sequence ID" value="NC_000964.3"/>
</dbReference>
<dbReference type="RefSeq" id="WP_003227400.1">
    <property type="nucleotide sequence ID" value="NZ_OZ025638.1"/>
</dbReference>
<dbReference type="SMR" id="P39574"/>
<dbReference type="FunCoup" id="P39574">
    <property type="interactions" value="542"/>
</dbReference>
<dbReference type="STRING" id="224308.BSU38200"/>
<dbReference type="jPOST" id="P39574"/>
<dbReference type="PaxDb" id="224308-BSU38200"/>
<dbReference type="EnsemblBacteria" id="CAB15846">
    <property type="protein sequence ID" value="CAB15846"/>
    <property type="gene ID" value="BSU_38200"/>
</dbReference>
<dbReference type="GeneID" id="937297"/>
<dbReference type="KEGG" id="bsu:BSU38200"/>
<dbReference type="PATRIC" id="fig|224308.179.peg.4135"/>
<dbReference type="eggNOG" id="COG0153">
    <property type="taxonomic scope" value="Bacteria"/>
</dbReference>
<dbReference type="InParanoid" id="P39574"/>
<dbReference type="OrthoDB" id="250531at2"/>
<dbReference type="PhylomeDB" id="P39574"/>
<dbReference type="BioCyc" id="BSUB:BSU38200-MONOMER"/>
<dbReference type="UniPathway" id="UPA00214"/>
<dbReference type="Proteomes" id="UP000001570">
    <property type="component" value="Chromosome"/>
</dbReference>
<dbReference type="GO" id="GO:0005829">
    <property type="term" value="C:cytosol"/>
    <property type="evidence" value="ECO:0000318"/>
    <property type="project" value="GO_Central"/>
</dbReference>
<dbReference type="GO" id="GO:0005524">
    <property type="term" value="F:ATP binding"/>
    <property type="evidence" value="ECO:0007669"/>
    <property type="project" value="UniProtKB-UniRule"/>
</dbReference>
<dbReference type="GO" id="GO:0004335">
    <property type="term" value="F:galactokinase activity"/>
    <property type="evidence" value="ECO:0000318"/>
    <property type="project" value="GO_Central"/>
</dbReference>
<dbReference type="GO" id="GO:0000287">
    <property type="term" value="F:magnesium ion binding"/>
    <property type="evidence" value="ECO:0007669"/>
    <property type="project" value="UniProtKB-UniRule"/>
</dbReference>
<dbReference type="GO" id="GO:0006012">
    <property type="term" value="P:galactose metabolic process"/>
    <property type="evidence" value="ECO:0000318"/>
    <property type="project" value="GO_Central"/>
</dbReference>
<dbReference type="FunFam" id="3.30.230.10:FF:000017">
    <property type="entry name" value="Galactokinase"/>
    <property type="match status" value="1"/>
</dbReference>
<dbReference type="FunFam" id="3.30.70.890:FF:000001">
    <property type="entry name" value="Galactokinase"/>
    <property type="match status" value="1"/>
</dbReference>
<dbReference type="Gene3D" id="3.30.230.10">
    <property type="match status" value="1"/>
</dbReference>
<dbReference type="Gene3D" id="3.30.70.890">
    <property type="entry name" value="GHMP kinase, C-terminal domain"/>
    <property type="match status" value="1"/>
</dbReference>
<dbReference type="HAMAP" id="MF_00246">
    <property type="entry name" value="Galactokinase"/>
    <property type="match status" value="1"/>
</dbReference>
<dbReference type="InterPro" id="IPR000705">
    <property type="entry name" value="Galactokinase"/>
</dbReference>
<dbReference type="InterPro" id="IPR022963">
    <property type="entry name" value="Galactokinase_bac"/>
</dbReference>
<dbReference type="InterPro" id="IPR019741">
    <property type="entry name" value="Galactokinase_CS"/>
</dbReference>
<dbReference type="InterPro" id="IPR019539">
    <property type="entry name" value="GalKase_N"/>
</dbReference>
<dbReference type="InterPro" id="IPR013750">
    <property type="entry name" value="GHMP_kinase_C_dom"/>
</dbReference>
<dbReference type="InterPro" id="IPR036554">
    <property type="entry name" value="GHMP_kinase_C_sf"/>
</dbReference>
<dbReference type="InterPro" id="IPR006204">
    <property type="entry name" value="GHMP_kinase_N_dom"/>
</dbReference>
<dbReference type="InterPro" id="IPR006203">
    <property type="entry name" value="GHMP_knse_ATP-bd_CS"/>
</dbReference>
<dbReference type="InterPro" id="IPR006206">
    <property type="entry name" value="Mevalonate/galactokinase"/>
</dbReference>
<dbReference type="InterPro" id="IPR020568">
    <property type="entry name" value="Ribosomal_Su5_D2-typ_SF"/>
</dbReference>
<dbReference type="InterPro" id="IPR014721">
    <property type="entry name" value="Ribsml_uS5_D2-typ_fold_subgr"/>
</dbReference>
<dbReference type="NCBIfam" id="TIGR00131">
    <property type="entry name" value="gal_kin"/>
    <property type="match status" value="1"/>
</dbReference>
<dbReference type="NCBIfam" id="NF003705">
    <property type="entry name" value="PRK05322.1"/>
    <property type="match status" value="1"/>
</dbReference>
<dbReference type="PANTHER" id="PTHR10457:SF7">
    <property type="entry name" value="GALACTOKINASE-RELATED"/>
    <property type="match status" value="1"/>
</dbReference>
<dbReference type="PANTHER" id="PTHR10457">
    <property type="entry name" value="MEVALONATE KINASE/GALACTOKINASE"/>
    <property type="match status" value="1"/>
</dbReference>
<dbReference type="Pfam" id="PF10509">
    <property type="entry name" value="GalKase_gal_bdg"/>
    <property type="match status" value="1"/>
</dbReference>
<dbReference type="Pfam" id="PF08544">
    <property type="entry name" value="GHMP_kinases_C"/>
    <property type="match status" value="1"/>
</dbReference>
<dbReference type="Pfam" id="PF00288">
    <property type="entry name" value="GHMP_kinases_N"/>
    <property type="match status" value="1"/>
</dbReference>
<dbReference type="PIRSF" id="PIRSF000530">
    <property type="entry name" value="Galactokinase"/>
    <property type="match status" value="1"/>
</dbReference>
<dbReference type="PRINTS" id="PR00473">
    <property type="entry name" value="GALCTOKINASE"/>
</dbReference>
<dbReference type="PRINTS" id="PR00959">
    <property type="entry name" value="MEVGALKINASE"/>
</dbReference>
<dbReference type="SUPFAM" id="SSF55060">
    <property type="entry name" value="GHMP Kinase, C-terminal domain"/>
    <property type="match status" value="1"/>
</dbReference>
<dbReference type="SUPFAM" id="SSF54211">
    <property type="entry name" value="Ribosomal protein S5 domain 2-like"/>
    <property type="match status" value="1"/>
</dbReference>
<dbReference type="PROSITE" id="PS00106">
    <property type="entry name" value="GALACTOKINASE"/>
    <property type="match status" value="1"/>
</dbReference>
<dbReference type="PROSITE" id="PS00627">
    <property type="entry name" value="GHMP_KINASES_ATP"/>
    <property type="match status" value="1"/>
</dbReference>
<organism>
    <name type="scientific">Bacillus subtilis (strain 168)</name>
    <dbReference type="NCBI Taxonomy" id="224308"/>
    <lineage>
        <taxon>Bacteria</taxon>
        <taxon>Bacillati</taxon>
        <taxon>Bacillota</taxon>
        <taxon>Bacilli</taxon>
        <taxon>Bacillales</taxon>
        <taxon>Bacillaceae</taxon>
        <taxon>Bacillus</taxon>
    </lineage>
</organism>
<keyword id="KW-0067">ATP-binding</keyword>
<keyword id="KW-0119">Carbohydrate metabolism</keyword>
<keyword id="KW-0963">Cytoplasm</keyword>
<keyword id="KW-0299">Galactose metabolism</keyword>
<keyword id="KW-0418">Kinase</keyword>
<keyword id="KW-0460">Magnesium</keyword>
<keyword id="KW-0479">Metal-binding</keyword>
<keyword id="KW-0547">Nucleotide-binding</keyword>
<keyword id="KW-1185">Reference proteome</keyword>
<keyword id="KW-0808">Transferase</keyword>
<protein>
    <recommendedName>
        <fullName evidence="1">Galactokinase</fullName>
        <ecNumber evidence="1">2.7.1.6</ecNumber>
    </recommendedName>
    <alternativeName>
        <fullName evidence="1">Galactose kinase</fullName>
    </alternativeName>
</protein>
<comment type="function">
    <text evidence="1">Catalyzes the transfer of the gamma-phosphate of ATP to D-galactose to form alpha-D-galactose-1-phosphate (Gal-1-P).</text>
</comment>
<comment type="catalytic activity">
    <reaction evidence="1">
        <text>alpha-D-galactose + ATP = alpha-D-galactose 1-phosphate + ADP + H(+)</text>
        <dbReference type="Rhea" id="RHEA:13553"/>
        <dbReference type="ChEBI" id="CHEBI:15378"/>
        <dbReference type="ChEBI" id="CHEBI:28061"/>
        <dbReference type="ChEBI" id="CHEBI:30616"/>
        <dbReference type="ChEBI" id="CHEBI:58336"/>
        <dbReference type="ChEBI" id="CHEBI:456216"/>
        <dbReference type="EC" id="2.7.1.6"/>
    </reaction>
</comment>
<comment type="pathway">
    <text evidence="1">Carbohydrate metabolism; galactose metabolism.</text>
</comment>
<comment type="subcellular location">
    <subcellularLocation>
        <location evidence="1">Cytoplasm</location>
    </subcellularLocation>
</comment>
<comment type="similarity">
    <text evidence="1">Belongs to the GHMP kinase family. GalK subfamily.</text>
</comment>
<proteinExistence type="inferred from homology"/>
<accession>P39574</accession>
<evidence type="ECO:0000255" key="1">
    <source>
        <dbReference type="HAMAP-Rule" id="MF_00246"/>
    </source>
</evidence>
<gene>
    <name evidence="1" type="primary">galK</name>
    <name type="ordered locus">BSU38200</name>
    <name type="ORF">ipa-35d</name>
</gene>
<feature type="chain" id="PRO_0000184603" description="Galactokinase">
    <location>
        <begin position="1"/>
        <end position="390"/>
    </location>
</feature>
<feature type="active site" description="Proton acceptor" evidence="1">
    <location>
        <position position="174"/>
    </location>
</feature>
<feature type="binding site" evidence="1">
    <location>
        <begin position="33"/>
        <end position="36"/>
    </location>
    <ligand>
        <name>substrate</name>
    </ligand>
</feature>
<feature type="binding site" evidence="1">
    <location>
        <position position="67"/>
    </location>
    <ligand>
        <name>ATP</name>
        <dbReference type="ChEBI" id="CHEBI:30616"/>
    </ligand>
</feature>
<feature type="binding site" evidence="1">
    <location>
        <begin position="124"/>
        <end position="130"/>
    </location>
    <ligand>
        <name>ATP</name>
        <dbReference type="ChEBI" id="CHEBI:30616"/>
    </ligand>
</feature>
<feature type="binding site" evidence="1">
    <location>
        <position position="130"/>
    </location>
    <ligand>
        <name>Mg(2+)</name>
        <dbReference type="ChEBI" id="CHEBI:18420"/>
    </ligand>
</feature>
<feature type="binding site" evidence="1">
    <location>
        <position position="162"/>
    </location>
    <ligand>
        <name>Mg(2+)</name>
        <dbReference type="ChEBI" id="CHEBI:18420"/>
    </ligand>
</feature>
<feature type="binding site" evidence="1">
    <location>
        <position position="224"/>
    </location>
    <ligand>
        <name>substrate</name>
    </ligand>
</feature>
<feature type="site" description="Transition state stabilizer" evidence="1">
    <location>
        <position position="27"/>
    </location>
</feature>
<reference key="1">
    <citation type="journal article" date="1993" name="Mol. Microbiol.">
        <title>Bacillus subtilis genome project: cloning and sequencing of the 97 kb region from 325 degrees to 333 degrees.</title>
        <authorList>
            <person name="Glaser P."/>
            <person name="Kunst F."/>
            <person name="Arnaud M."/>
            <person name="Coudart M.P."/>
            <person name="Gonzales W."/>
            <person name="Hullo M.-F."/>
            <person name="Ionescu M."/>
            <person name="Lubochinsky B."/>
            <person name="Marcelino L."/>
            <person name="Moszer I."/>
            <person name="Presecan E."/>
            <person name="Santana M."/>
            <person name="Schneider E."/>
            <person name="Schweizer J."/>
            <person name="Vertes A."/>
            <person name="Rapoport G."/>
            <person name="Danchin A."/>
        </authorList>
    </citation>
    <scope>NUCLEOTIDE SEQUENCE [GENOMIC DNA]</scope>
    <source>
        <strain>168</strain>
    </source>
</reference>
<reference key="2">
    <citation type="journal article" date="1997" name="Nature">
        <title>The complete genome sequence of the Gram-positive bacterium Bacillus subtilis.</title>
        <authorList>
            <person name="Kunst F."/>
            <person name="Ogasawara N."/>
            <person name="Moszer I."/>
            <person name="Albertini A.M."/>
            <person name="Alloni G."/>
            <person name="Azevedo V."/>
            <person name="Bertero M.G."/>
            <person name="Bessieres P."/>
            <person name="Bolotin A."/>
            <person name="Borchert S."/>
            <person name="Borriss R."/>
            <person name="Boursier L."/>
            <person name="Brans A."/>
            <person name="Braun M."/>
            <person name="Brignell S.C."/>
            <person name="Bron S."/>
            <person name="Brouillet S."/>
            <person name="Bruschi C.V."/>
            <person name="Caldwell B."/>
            <person name="Capuano V."/>
            <person name="Carter N.M."/>
            <person name="Choi S.-K."/>
            <person name="Codani J.-J."/>
            <person name="Connerton I.F."/>
            <person name="Cummings N.J."/>
            <person name="Daniel R.A."/>
            <person name="Denizot F."/>
            <person name="Devine K.M."/>
            <person name="Duesterhoeft A."/>
            <person name="Ehrlich S.D."/>
            <person name="Emmerson P.T."/>
            <person name="Entian K.-D."/>
            <person name="Errington J."/>
            <person name="Fabret C."/>
            <person name="Ferrari E."/>
            <person name="Foulger D."/>
            <person name="Fritz C."/>
            <person name="Fujita M."/>
            <person name="Fujita Y."/>
            <person name="Fuma S."/>
            <person name="Galizzi A."/>
            <person name="Galleron N."/>
            <person name="Ghim S.-Y."/>
            <person name="Glaser P."/>
            <person name="Goffeau A."/>
            <person name="Golightly E.J."/>
            <person name="Grandi G."/>
            <person name="Guiseppi G."/>
            <person name="Guy B.J."/>
            <person name="Haga K."/>
            <person name="Haiech J."/>
            <person name="Harwood C.R."/>
            <person name="Henaut A."/>
            <person name="Hilbert H."/>
            <person name="Holsappel S."/>
            <person name="Hosono S."/>
            <person name="Hullo M.-F."/>
            <person name="Itaya M."/>
            <person name="Jones L.-M."/>
            <person name="Joris B."/>
            <person name="Karamata D."/>
            <person name="Kasahara Y."/>
            <person name="Klaerr-Blanchard M."/>
            <person name="Klein C."/>
            <person name="Kobayashi Y."/>
            <person name="Koetter P."/>
            <person name="Koningstein G."/>
            <person name="Krogh S."/>
            <person name="Kumano M."/>
            <person name="Kurita K."/>
            <person name="Lapidus A."/>
            <person name="Lardinois S."/>
            <person name="Lauber J."/>
            <person name="Lazarevic V."/>
            <person name="Lee S.-M."/>
            <person name="Levine A."/>
            <person name="Liu H."/>
            <person name="Masuda S."/>
            <person name="Mauel C."/>
            <person name="Medigue C."/>
            <person name="Medina N."/>
            <person name="Mellado R.P."/>
            <person name="Mizuno M."/>
            <person name="Moestl D."/>
            <person name="Nakai S."/>
            <person name="Noback M."/>
            <person name="Noone D."/>
            <person name="O'Reilly M."/>
            <person name="Ogawa K."/>
            <person name="Ogiwara A."/>
            <person name="Oudega B."/>
            <person name="Park S.-H."/>
            <person name="Parro V."/>
            <person name="Pohl T.M."/>
            <person name="Portetelle D."/>
            <person name="Porwollik S."/>
            <person name="Prescott A.M."/>
            <person name="Presecan E."/>
            <person name="Pujic P."/>
            <person name="Purnelle B."/>
            <person name="Rapoport G."/>
            <person name="Rey M."/>
            <person name="Reynolds S."/>
            <person name="Rieger M."/>
            <person name="Rivolta C."/>
            <person name="Rocha E."/>
            <person name="Roche B."/>
            <person name="Rose M."/>
            <person name="Sadaie Y."/>
            <person name="Sato T."/>
            <person name="Scanlan E."/>
            <person name="Schleich S."/>
            <person name="Schroeter R."/>
            <person name="Scoffone F."/>
            <person name="Sekiguchi J."/>
            <person name="Sekowska A."/>
            <person name="Seror S.J."/>
            <person name="Serror P."/>
            <person name="Shin B.-S."/>
            <person name="Soldo B."/>
            <person name="Sorokin A."/>
            <person name="Tacconi E."/>
            <person name="Takagi T."/>
            <person name="Takahashi H."/>
            <person name="Takemaru K."/>
            <person name="Takeuchi M."/>
            <person name="Tamakoshi A."/>
            <person name="Tanaka T."/>
            <person name="Terpstra P."/>
            <person name="Tognoni A."/>
            <person name="Tosato V."/>
            <person name="Uchiyama S."/>
            <person name="Vandenbol M."/>
            <person name="Vannier F."/>
            <person name="Vassarotti A."/>
            <person name="Viari A."/>
            <person name="Wambutt R."/>
            <person name="Wedler E."/>
            <person name="Wedler H."/>
            <person name="Weitzenegger T."/>
            <person name="Winters P."/>
            <person name="Wipat A."/>
            <person name="Yamamoto H."/>
            <person name="Yamane K."/>
            <person name="Yasumoto K."/>
            <person name="Yata K."/>
            <person name="Yoshida K."/>
            <person name="Yoshikawa H.-F."/>
            <person name="Zumstein E."/>
            <person name="Yoshikawa H."/>
            <person name="Danchin A."/>
        </authorList>
    </citation>
    <scope>NUCLEOTIDE SEQUENCE [LARGE SCALE GENOMIC DNA]</scope>
    <source>
        <strain>168</strain>
    </source>
</reference>
<name>GAL1_BACSU</name>
<sequence length="390" mass="43521">MREELKGIFASVFGEKEGLRFFFAPGRVNLIGEHTDYNGGHVFPCALTMGTYAAVAERNDGLVRMYSDNFRNAGIKECSLDDIRYQKEDDWANYPKGVIYEFQQRGYAVPHGFDIVFSGNIPNGAGLSSSASIELLMGVVLQSYFHPEVDALELVKMAQHAENHFIGVNCGIMDQFAIGMGKKHHAMLLNCDTLDYEYSKLNVSGLALVIANTNKKRTLADSSYNTRRQECNDALLDLKKGLDIAALGDIKPSDFDAHSSLIQNETNRRRAKHAVYENHRAIKTAHMFKENNIDEIGQLMKESHLSLKDDYEVTCPELDELVFAAWDHEGVIGSRMTGAGFGGCTISIVKDEFVDDFIQKVGDRYQEKTGLRADFYVADIGEGARELKGE</sequence>